<sequence>MAENGTDCEQRRVGMPKEQNNGSFQDPSFMCNRKRRDREERQSIVLWRKPLITLQYFILEVLINLKEWSVRLWHRRMMVVSVLLLLAVLSVAYYIEGEHQQCVQYIEKKCLWCAYWVGLGILSSVGLGTGLHTFLLYLGPHIASVTIAAYECNSVNFPEPPYPDEIICPDEEGTEGAISLWTIISKVRLEACMWGAGTAIGELPPYFMARAARLSGVETDDEEYAEFEEMLEHAQTAQDFATRAKLTVQNLVQKVGFLGILACASIPNPLFDLAGITCGHFLVPFWTFFGATLIGKAIIKMHIQKLFVIITFSKHIVEQMVSLIGVIPSIGPSLQKPFQEYLEAQRKKLHHKGDSGTPQSENWLSWAFEKLVIIMVFYFILSIINSMAQSYAKRVQQKKLSVEKTK</sequence>
<keyword id="KW-1003">Cell membrane</keyword>
<keyword id="KW-0256">Endoplasmic reticulum</keyword>
<keyword id="KW-0445">Lipid transport</keyword>
<keyword id="KW-0472">Membrane</keyword>
<keyword id="KW-1185">Reference proteome</keyword>
<keyword id="KW-0812">Transmembrane</keyword>
<keyword id="KW-1133">Transmembrane helix</keyword>
<keyword id="KW-0813">Transport</keyword>
<keyword id="KW-0926">Vacuole</keyword>
<evidence type="ECO:0000250" key="1">
    <source>
        <dbReference type="UniProtKB" id="Q91ZQ0"/>
    </source>
</evidence>
<evidence type="ECO:0000250" key="2">
    <source>
        <dbReference type="UniProtKB" id="Q96GC9"/>
    </source>
</evidence>
<evidence type="ECO:0000255" key="3"/>
<evidence type="ECO:0000256" key="4">
    <source>
        <dbReference type="SAM" id="MobiDB-lite"/>
    </source>
</evidence>
<evidence type="ECO:0000305" key="5"/>
<reference key="1">
    <citation type="submission" date="2004-06" db="EMBL/GenBank/DDBJ databases">
        <authorList>
            <consortium name="NIH - Xenopus Gene Collection (XGC) project"/>
        </authorList>
    </citation>
    <scope>NUCLEOTIDE SEQUENCE [LARGE SCALE MRNA]</scope>
    <source>
        <tissue>Embryo</tissue>
    </source>
</reference>
<comment type="function">
    <text evidence="2">Phospholipid scramblase involved in lipid homeostasis and membrane dynamics processes. Has phospholipid scramblase activity toward cholesterol and phosphatidylserine, as well as phosphatidylethanolamine and phosphatidylcholine. Required for autophagosome formation: participates in early stages of autophagosome biogenesis at the endoplasmic reticulum (ER) membrane by reequilibrating the leaflets of the ER as lipids are extracted by atg2 (atg2a or atg2b) to mediate autophagosome assembly. In addition to autophagy, involved in other processes in which phospholipid scramblase activity is required. Modulates ER contacts with lipid droplets, mitochondria and endosomes.</text>
</comment>
<comment type="catalytic activity">
    <reaction evidence="2">
        <text>a 1,2-diacyl-sn-glycero-3-phospho-L-serine(in) = a 1,2-diacyl-sn-glycero-3-phospho-L-serine(out)</text>
        <dbReference type="Rhea" id="RHEA:38663"/>
        <dbReference type="ChEBI" id="CHEBI:57262"/>
    </reaction>
</comment>
<comment type="catalytic activity">
    <reaction evidence="2">
        <text>cholesterol(in) = cholesterol(out)</text>
        <dbReference type="Rhea" id="RHEA:39747"/>
        <dbReference type="ChEBI" id="CHEBI:16113"/>
    </reaction>
</comment>
<comment type="catalytic activity">
    <reaction evidence="2">
        <text>a 1,2-diacyl-sn-glycero-3-phosphocholine(in) = a 1,2-diacyl-sn-glycero-3-phosphocholine(out)</text>
        <dbReference type="Rhea" id="RHEA:38571"/>
        <dbReference type="ChEBI" id="CHEBI:57643"/>
    </reaction>
</comment>
<comment type="catalytic activity">
    <reaction evidence="2">
        <text>a 1,2-diacyl-sn-glycero-3-phosphoethanolamine(in) = a 1,2-diacyl-sn-glycero-3-phosphoethanolamine(out)</text>
        <dbReference type="Rhea" id="RHEA:38895"/>
        <dbReference type="ChEBI" id="CHEBI:64612"/>
    </reaction>
</comment>
<comment type="subcellular location">
    <subcellularLocation>
        <location evidence="1">Endoplasmic reticulum-Golgi intermediate compartment membrane</location>
        <topology evidence="3">Multi-pass membrane protein</topology>
    </subcellularLocation>
    <subcellularLocation>
        <location evidence="2">Cell membrane</location>
        <topology evidence="3">Multi-pass membrane protein</topology>
    </subcellularLocation>
    <subcellularLocation>
        <location evidence="1">Vacuole membrane</location>
        <topology evidence="3">Multi-pass membrane protein</topology>
    </subcellularLocation>
    <subcellularLocation>
        <location evidence="2">Endoplasmic reticulum membrane</location>
        <topology evidence="3">Multi-pass membrane protein</topology>
    </subcellularLocation>
</comment>
<comment type="domain">
    <text evidence="2">The VTT domain was previously called the SNARE-assoc domain. As there is no evidence that this domain associates with SNARE proteins, it was renamed as VMP1, TMEM41, and TVP38 (VTT) domain.</text>
</comment>
<comment type="similarity">
    <text evidence="5">Belongs to the VMP1 family.</text>
</comment>
<dbReference type="EMBL" id="BC072335">
    <property type="protein sequence ID" value="AAH72335.1"/>
    <property type="molecule type" value="mRNA"/>
</dbReference>
<dbReference type="RefSeq" id="NP_001085166.1">
    <property type="nucleotide sequence ID" value="NM_001091697.1"/>
</dbReference>
<dbReference type="SMR" id="Q6INE8"/>
<dbReference type="DNASU" id="432249"/>
<dbReference type="GeneID" id="432249"/>
<dbReference type="KEGG" id="xla:432249"/>
<dbReference type="AGR" id="Xenbase:XB-GENE-1000959"/>
<dbReference type="CTD" id="432249"/>
<dbReference type="Xenbase" id="XB-GENE-1000959">
    <property type="gene designation" value="vmp1.L"/>
</dbReference>
<dbReference type="OrthoDB" id="2016540at2759"/>
<dbReference type="Proteomes" id="UP000186698">
    <property type="component" value="Chromosome 2L"/>
</dbReference>
<dbReference type="Bgee" id="432249">
    <property type="expression patterns" value="Expressed in zone of skin and 19 other cell types or tissues"/>
</dbReference>
<dbReference type="GO" id="GO:0005783">
    <property type="term" value="C:endoplasmic reticulum"/>
    <property type="evidence" value="ECO:0000250"/>
    <property type="project" value="UniProtKB"/>
</dbReference>
<dbReference type="GO" id="GO:0005789">
    <property type="term" value="C:endoplasmic reticulum membrane"/>
    <property type="evidence" value="ECO:0007669"/>
    <property type="project" value="UniProtKB-SubCell"/>
</dbReference>
<dbReference type="GO" id="GO:0033116">
    <property type="term" value="C:endoplasmic reticulum-Golgi intermediate compartment membrane"/>
    <property type="evidence" value="ECO:0007669"/>
    <property type="project" value="UniProtKB-SubCell"/>
</dbReference>
<dbReference type="GO" id="GO:0005886">
    <property type="term" value="C:plasma membrane"/>
    <property type="evidence" value="ECO:0007669"/>
    <property type="project" value="UniProtKB-SubCell"/>
</dbReference>
<dbReference type="GO" id="GO:0005774">
    <property type="term" value="C:vacuolar membrane"/>
    <property type="evidence" value="ECO:0007669"/>
    <property type="project" value="UniProtKB-SubCell"/>
</dbReference>
<dbReference type="GO" id="GO:0017128">
    <property type="term" value="F:phospholipid scramblase activity"/>
    <property type="evidence" value="ECO:0000250"/>
    <property type="project" value="UniProtKB"/>
</dbReference>
<dbReference type="GO" id="GO:0042953">
    <property type="term" value="P:lipoprotein transport"/>
    <property type="evidence" value="ECO:0000250"/>
    <property type="project" value="UniProtKB"/>
</dbReference>
<gene>
    <name evidence="2" type="primary">vmp1</name>
</gene>
<accession>Q6INE8</accession>
<protein>
    <recommendedName>
        <fullName evidence="5">Vacuole membrane protein 1</fullName>
    </recommendedName>
</protein>
<feature type="chain" id="PRO_0000284551" description="Vacuole membrane protein 1">
    <location>
        <begin position="1"/>
        <end position="406"/>
    </location>
</feature>
<feature type="topological domain" description="Cytoplasmic" evidence="3">
    <location>
        <begin position="1"/>
        <end position="42"/>
    </location>
</feature>
<feature type="transmembrane region" description="Helical" evidence="3">
    <location>
        <begin position="43"/>
        <end position="63"/>
    </location>
</feature>
<feature type="topological domain" description="Extracellular" evidence="3">
    <location>
        <begin position="64"/>
        <end position="76"/>
    </location>
</feature>
<feature type="transmembrane region" description="Helical" evidence="3">
    <location>
        <begin position="77"/>
        <end position="97"/>
    </location>
</feature>
<feature type="topological domain" description="Cytoplasmic" evidence="3">
    <location>
        <begin position="98"/>
        <end position="110"/>
    </location>
</feature>
<feature type="transmembrane region" description="Helical" evidence="3">
    <location>
        <begin position="111"/>
        <end position="131"/>
    </location>
</feature>
<feature type="topological domain" description="Extracellular" evidence="3">
    <location>
        <begin position="132"/>
        <end position="250"/>
    </location>
</feature>
<feature type="transmembrane region" description="Helical" evidence="3">
    <location>
        <begin position="251"/>
        <end position="271"/>
    </location>
</feature>
<feature type="topological domain" description="Cytoplasmic" evidence="3">
    <location>
        <begin position="272"/>
        <end position="273"/>
    </location>
</feature>
<feature type="transmembrane region" description="Helical" evidence="3">
    <location>
        <begin position="274"/>
        <end position="294"/>
    </location>
</feature>
<feature type="topological domain" description="Extracellular" evidence="3">
    <location>
        <begin position="295"/>
        <end position="306"/>
    </location>
</feature>
<feature type="transmembrane region" description="Helical" evidence="3">
    <location>
        <begin position="307"/>
        <end position="327"/>
    </location>
</feature>
<feature type="topological domain" description="Cytoplasmic" evidence="3">
    <location>
        <begin position="328"/>
        <end position="363"/>
    </location>
</feature>
<feature type="transmembrane region" description="Helical" evidence="3">
    <location>
        <begin position="364"/>
        <end position="384"/>
    </location>
</feature>
<feature type="topological domain" description="Extracellular" evidence="3">
    <location>
        <begin position="385"/>
        <end position="406"/>
    </location>
</feature>
<feature type="region of interest" description="Disordered" evidence="4">
    <location>
        <begin position="1"/>
        <end position="22"/>
    </location>
</feature>
<feature type="region of interest" description="VTT domain" evidence="2">
    <location>
        <begin position="173"/>
        <end position="316"/>
    </location>
</feature>
<organism>
    <name type="scientific">Xenopus laevis</name>
    <name type="common">African clawed frog</name>
    <dbReference type="NCBI Taxonomy" id="8355"/>
    <lineage>
        <taxon>Eukaryota</taxon>
        <taxon>Metazoa</taxon>
        <taxon>Chordata</taxon>
        <taxon>Craniata</taxon>
        <taxon>Vertebrata</taxon>
        <taxon>Euteleostomi</taxon>
        <taxon>Amphibia</taxon>
        <taxon>Batrachia</taxon>
        <taxon>Anura</taxon>
        <taxon>Pipoidea</taxon>
        <taxon>Pipidae</taxon>
        <taxon>Xenopodinae</taxon>
        <taxon>Xenopus</taxon>
        <taxon>Xenopus</taxon>
    </lineage>
</organism>
<proteinExistence type="evidence at transcript level"/>
<name>VMP1_XENLA</name>